<keyword id="KW-0240">DNA-directed RNA polymerase</keyword>
<keyword id="KW-0548">Nucleotidyltransferase</keyword>
<keyword id="KW-0804">Transcription</keyword>
<keyword id="KW-0808">Transferase</keyword>
<name>RPOB_MYCBP</name>
<feature type="chain" id="PRO_0000300349" description="DNA-directed RNA polymerase subunit beta">
    <location>
        <begin position="1"/>
        <end position="1178"/>
    </location>
</feature>
<feature type="region of interest" description="Disordered" evidence="2">
    <location>
        <begin position="1"/>
        <end position="37"/>
    </location>
</feature>
<feature type="compositionally biased region" description="Low complexity" evidence="2">
    <location>
        <begin position="18"/>
        <end position="33"/>
    </location>
</feature>
<proteinExistence type="inferred from homology"/>
<protein>
    <recommendedName>
        <fullName evidence="1">DNA-directed RNA polymerase subunit beta</fullName>
        <shortName evidence="1">RNAP subunit beta</shortName>
        <ecNumber evidence="1">2.7.7.6</ecNumber>
    </recommendedName>
    <alternativeName>
        <fullName evidence="1">RNA polymerase subunit beta</fullName>
    </alternativeName>
    <alternativeName>
        <fullName evidence="1">Transcriptase subunit beta</fullName>
    </alternativeName>
</protein>
<sequence>MLEGCILADSRQSKTAASPSPSRPQSSSNNSVPGAPNRVSFAKLREPLEVPGLLDVQTDSFEWLIGSPRWRESAAERGDVNPVGGLEEVLYELSPIEDFSGSMSLSFSDPRFDDVKAPVDECKDKDMTYAAPLFVTAEFINNNTGEIKSQTVFMGDFPMMTEKGTFIINGTERVVVSQLVRSPGVYFDETIDKSTDKTLHSVKVIPSRGAWLEFDVDKRDTVGVRIDRKRRQPVTVLLKALGWTSEQIVERFGFSEIMRSTLEKDNTVGTDEALLDIYRKLRPGEPPTKESAQTLLENLFFKEKRYDLARVGRYKVNKKLGLHVGEPITSSTLTEEDVVATIEYLVRLHEGQTTMTVPGGVEVPVETDDIDHFGNRRLRTVGELIQNQIRVGMSRMERVVRERMTTQDVEAITPQTLINIRPVVAAIKEFFGTSQLSQFMDQNNPLSGLTHKRRLSALGPGGLSRERAGLEVRDVHPSHYGRMCPIETPEGPNIGLIGSLSVYARVNPFGFIETPYRKVVDGVVSDEIVYLTADEEDRHVVAQANSPIDADGRFVEPRVLVRRKAGEVEYVPSSEVDYMDVSPRQMVSVATAMIPFLEHDDANRALMGANMQRQAVPLVRSEAPLVGTGMELRAAIDAGDVVVAEESGVIEEVSADYITVMHDNGTRRTYRMRKFARSNHGTCANQCPIVDAGDRVEAGQVIADGPCTDDGEMALGKNLLVAIMPWEGHNYEDAIILSNRLVEEDVLTSIHIEEHEIDARDTKLGAEEITRDIPNISDEVLADLDERGIVRIGAEVRDGDILVGKVTPKGETELTPEERLLRAIFGEKAREVRDTSLKVPHGESGKVIGIRVFSREDEDELPAGVNELVRVYVAQKRKISDGDKLAGRHGNKGVIGKILPVEDMPFLADGTPVDIILNTHGVPRRMNIGQILETHLGWCAHSGWKVDAAKGVPDWAARLPDELLEAQPNAIVSTPVFDGAQEAELQGLLSCTLPNRDGDVLVDADGKAMLFDGRSGEPFPYPVTVGYMYIMKLHHLVDDKIHARSTGPYSMITQQPLGGKAQFGGQRFGEMECWAMQAYGAAYTLQELLTIKSDDTVGRVKVYEAIVKGENIPEPGIPESFKVLLKELQSLCLNVEVLSSDGAAIELREGEDEDLERAAANLGINLSRNESASVEDLA</sequence>
<evidence type="ECO:0000255" key="1">
    <source>
        <dbReference type="HAMAP-Rule" id="MF_01321"/>
    </source>
</evidence>
<evidence type="ECO:0000256" key="2">
    <source>
        <dbReference type="SAM" id="MobiDB-lite"/>
    </source>
</evidence>
<evidence type="ECO:0000305" key="3"/>
<organism>
    <name type="scientific">Mycobacterium bovis (strain BCG / Pasteur 1173P2)</name>
    <dbReference type="NCBI Taxonomy" id="410289"/>
    <lineage>
        <taxon>Bacteria</taxon>
        <taxon>Bacillati</taxon>
        <taxon>Actinomycetota</taxon>
        <taxon>Actinomycetes</taxon>
        <taxon>Mycobacteriales</taxon>
        <taxon>Mycobacteriaceae</taxon>
        <taxon>Mycobacterium</taxon>
        <taxon>Mycobacterium tuberculosis complex</taxon>
    </lineage>
</organism>
<gene>
    <name evidence="1" type="primary">rpoB</name>
    <name type="ordered locus">BCG_0716</name>
</gene>
<reference key="1">
    <citation type="journal article" date="2007" name="Proc. Natl. Acad. Sci. U.S.A.">
        <title>Genome plasticity of BCG and impact on vaccine efficacy.</title>
        <authorList>
            <person name="Brosch R."/>
            <person name="Gordon S.V."/>
            <person name="Garnier T."/>
            <person name="Eiglmeier K."/>
            <person name="Frigui W."/>
            <person name="Valenti P."/>
            <person name="Dos Santos S."/>
            <person name="Duthoy S."/>
            <person name="Lacroix C."/>
            <person name="Garcia-Pelayo C."/>
            <person name="Inwald J.K."/>
            <person name="Golby P."/>
            <person name="Garcia J.N."/>
            <person name="Hewinson R.G."/>
            <person name="Behr M.A."/>
            <person name="Quail M.A."/>
            <person name="Churcher C."/>
            <person name="Barrell B.G."/>
            <person name="Parkhill J."/>
            <person name="Cole S.T."/>
        </authorList>
    </citation>
    <scope>NUCLEOTIDE SEQUENCE [LARGE SCALE GENOMIC DNA]</scope>
    <source>
        <strain>BCG / Pasteur 1173P2</strain>
    </source>
</reference>
<dbReference type="EC" id="2.7.7.6" evidence="1"/>
<dbReference type="EMBL" id="AM408590">
    <property type="protein sequence ID" value="CAL70702.1"/>
    <property type="status" value="ALT_INIT"/>
    <property type="molecule type" value="Genomic_DNA"/>
</dbReference>
<dbReference type="SMR" id="A1KGE7"/>
<dbReference type="KEGG" id="mbb:BCG_0716"/>
<dbReference type="HOGENOM" id="CLU_000524_4_1_11"/>
<dbReference type="Proteomes" id="UP000001472">
    <property type="component" value="Chromosome"/>
</dbReference>
<dbReference type="GO" id="GO:0000428">
    <property type="term" value="C:DNA-directed RNA polymerase complex"/>
    <property type="evidence" value="ECO:0007669"/>
    <property type="project" value="UniProtKB-KW"/>
</dbReference>
<dbReference type="GO" id="GO:0003677">
    <property type="term" value="F:DNA binding"/>
    <property type="evidence" value="ECO:0007669"/>
    <property type="project" value="UniProtKB-UniRule"/>
</dbReference>
<dbReference type="GO" id="GO:0003899">
    <property type="term" value="F:DNA-directed RNA polymerase activity"/>
    <property type="evidence" value="ECO:0007669"/>
    <property type="project" value="UniProtKB-UniRule"/>
</dbReference>
<dbReference type="GO" id="GO:0032549">
    <property type="term" value="F:ribonucleoside binding"/>
    <property type="evidence" value="ECO:0007669"/>
    <property type="project" value="InterPro"/>
</dbReference>
<dbReference type="GO" id="GO:0006351">
    <property type="term" value="P:DNA-templated transcription"/>
    <property type="evidence" value="ECO:0007669"/>
    <property type="project" value="UniProtKB-UniRule"/>
</dbReference>
<dbReference type="CDD" id="cd00653">
    <property type="entry name" value="RNA_pol_B_RPB2"/>
    <property type="match status" value="1"/>
</dbReference>
<dbReference type="FunFam" id="3.90.1800.10:FF:000005">
    <property type="entry name" value="DNA-directed RNA polymerase subunit beta"/>
    <property type="match status" value="1"/>
</dbReference>
<dbReference type="Gene3D" id="2.40.50.100">
    <property type="match status" value="1"/>
</dbReference>
<dbReference type="Gene3D" id="2.40.50.150">
    <property type="match status" value="1"/>
</dbReference>
<dbReference type="Gene3D" id="3.90.1100.10">
    <property type="match status" value="1"/>
</dbReference>
<dbReference type="Gene3D" id="2.30.150.10">
    <property type="entry name" value="DNA-directed RNA polymerase, beta subunit, external 1 domain"/>
    <property type="match status" value="1"/>
</dbReference>
<dbReference type="Gene3D" id="2.40.270.10">
    <property type="entry name" value="DNA-directed RNA polymerase, subunit 2, domain 6"/>
    <property type="match status" value="1"/>
</dbReference>
<dbReference type="Gene3D" id="3.90.1800.10">
    <property type="entry name" value="RNA polymerase alpha subunit dimerisation domain"/>
    <property type="match status" value="1"/>
</dbReference>
<dbReference type="Gene3D" id="3.90.1110.10">
    <property type="entry name" value="RNA polymerase Rpb2, domain 2"/>
    <property type="match status" value="1"/>
</dbReference>
<dbReference type="HAMAP" id="MF_01321">
    <property type="entry name" value="RNApol_bact_RpoB"/>
    <property type="match status" value="1"/>
</dbReference>
<dbReference type="InterPro" id="IPR042107">
    <property type="entry name" value="DNA-dir_RNA_pol_bsu_ext_1_sf"/>
</dbReference>
<dbReference type="InterPro" id="IPR019462">
    <property type="entry name" value="DNA-dir_RNA_pol_bsu_external_1"/>
</dbReference>
<dbReference type="InterPro" id="IPR015712">
    <property type="entry name" value="DNA-dir_RNA_pol_su2"/>
</dbReference>
<dbReference type="InterPro" id="IPR007120">
    <property type="entry name" value="DNA-dir_RNAP_su2_dom"/>
</dbReference>
<dbReference type="InterPro" id="IPR037033">
    <property type="entry name" value="DNA-dir_RNAP_su2_hyb_sf"/>
</dbReference>
<dbReference type="InterPro" id="IPR010243">
    <property type="entry name" value="RNA_pol_bsu_bac"/>
</dbReference>
<dbReference type="InterPro" id="IPR007121">
    <property type="entry name" value="RNA_pol_bsu_CS"/>
</dbReference>
<dbReference type="InterPro" id="IPR007644">
    <property type="entry name" value="RNA_pol_bsu_protrusion"/>
</dbReference>
<dbReference type="InterPro" id="IPR007642">
    <property type="entry name" value="RNA_pol_Rpb2_2"/>
</dbReference>
<dbReference type="InterPro" id="IPR037034">
    <property type="entry name" value="RNA_pol_Rpb2_2_sf"/>
</dbReference>
<dbReference type="InterPro" id="IPR007645">
    <property type="entry name" value="RNA_pol_Rpb2_3"/>
</dbReference>
<dbReference type="InterPro" id="IPR007641">
    <property type="entry name" value="RNA_pol_Rpb2_7"/>
</dbReference>
<dbReference type="InterPro" id="IPR014724">
    <property type="entry name" value="RNA_pol_RPB2_OB-fold"/>
</dbReference>
<dbReference type="NCBIfam" id="NF001616">
    <property type="entry name" value="PRK00405.1"/>
    <property type="match status" value="1"/>
</dbReference>
<dbReference type="NCBIfam" id="TIGR02013">
    <property type="entry name" value="rpoB"/>
    <property type="match status" value="1"/>
</dbReference>
<dbReference type="PANTHER" id="PTHR20856">
    <property type="entry name" value="DNA-DIRECTED RNA POLYMERASE I SUBUNIT 2"/>
    <property type="match status" value="1"/>
</dbReference>
<dbReference type="Pfam" id="PF04563">
    <property type="entry name" value="RNA_pol_Rpb2_1"/>
    <property type="match status" value="1"/>
</dbReference>
<dbReference type="Pfam" id="PF04561">
    <property type="entry name" value="RNA_pol_Rpb2_2"/>
    <property type="match status" value="1"/>
</dbReference>
<dbReference type="Pfam" id="PF04565">
    <property type="entry name" value="RNA_pol_Rpb2_3"/>
    <property type="match status" value="1"/>
</dbReference>
<dbReference type="Pfam" id="PF10385">
    <property type="entry name" value="RNA_pol_Rpb2_45"/>
    <property type="match status" value="1"/>
</dbReference>
<dbReference type="Pfam" id="PF00562">
    <property type="entry name" value="RNA_pol_Rpb2_6"/>
    <property type="match status" value="1"/>
</dbReference>
<dbReference type="Pfam" id="PF04560">
    <property type="entry name" value="RNA_pol_Rpb2_7"/>
    <property type="match status" value="1"/>
</dbReference>
<dbReference type="SUPFAM" id="SSF64484">
    <property type="entry name" value="beta and beta-prime subunits of DNA dependent RNA-polymerase"/>
    <property type="match status" value="1"/>
</dbReference>
<dbReference type="PROSITE" id="PS01166">
    <property type="entry name" value="RNA_POL_BETA"/>
    <property type="match status" value="1"/>
</dbReference>
<accession>A1KGE7</accession>
<comment type="function">
    <text evidence="1">DNA-dependent RNA polymerase catalyzes the transcription of DNA into RNA using the four ribonucleoside triphosphates as substrates.</text>
</comment>
<comment type="catalytic activity">
    <reaction evidence="1">
        <text>RNA(n) + a ribonucleoside 5'-triphosphate = RNA(n+1) + diphosphate</text>
        <dbReference type="Rhea" id="RHEA:21248"/>
        <dbReference type="Rhea" id="RHEA-COMP:14527"/>
        <dbReference type="Rhea" id="RHEA-COMP:17342"/>
        <dbReference type="ChEBI" id="CHEBI:33019"/>
        <dbReference type="ChEBI" id="CHEBI:61557"/>
        <dbReference type="ChEBI" id="CHEBI:140395"/>
        <dbReference type="EC" id="2.7.7.6"/>
    </reaction>
</comment>
<comment type="subunit">
    <text evidence="1">The RNAP catalytic core consists of 2 alpha, 1 beta, 1 beta' and 1 omega subunit. When a sigma factor is associated with the core the holoenzyme is formed, which can initiate transcription.</text>
</comment>
<comment type="similarity">
    <text evidence="1">Belongs to the RNA polymerase beta chain family.</text>
</comment>
<comment type="sequence caution" evidence="3">
    <conflict type="erroneous initiation">
        <sequence resource="EMBL-CDS" id="CAL70702"/>
    </conflict>
</comment>